<protein>
    <recommendedName>
        <fullName>Potassium transporter 2</fullName>
        <shortName>AtKT2</shortName>
        <shortName>AtKUP2</shortName>
        <shortName>AtPOT2</shortName>
    </recommendedName>
</protein>
<dbReference type="EMBL" id="AF012657">
    <property type="protein sequence ID" value="AAC49845.1"/>
    <property type="molecule type" value="mRNA"/>
</dbReference>
<dbReference type="EMBL" id="AC002336">
    <property type="protein sequence ID" value="AAB87583.2"/>
    <property type="molecule type" value="Genomic_DNA"/>
</dbReference>
<dbReference type="EMBL" id="CP002685">
    <property type="protein sequence ID" value="AEC09845.1"/>
    <property type="molecule type" value="Genomic_DNA"/>
</dbReference>
<dbReference type="EMBL" id="CP002685">
    <property type="protein sequence ID" value="AEC09846.1"/>
    <property type="molecule type" value="Genomic_DNA"/>
</dbReference>
<dbReference type="EMBL" id="CP002685">
    <property type="protein sequence ID" value="ANM61891.1"/>
    <property type="molecule type" value="Genomic_DNA"/>
</dbReference>
<dbReference type="EMBL" id="CP002685">
    <property type="protein sequence ID" value="ANM61892.1"/>
    <property type="molecule type" value="Genomic_DNA"/>
</dbReference>
<dbReference type="EMBL" id="CP002685">
    <property type="protein sequence ID" value="ANM61893.1"/>
    <property type="molecule type" value="Genomic_DNA"/>
</dbReference>
<dbReference type="EMBL" id="BT004049">
    <property type="protein sequence ID" value="AAO42081.1"/>
    <property type="molecule type" value="mRNA"/>
</dbReference>
<dbReference type="EMBL" id="BT005048">
    <property type="protein sequence ID" value="AAO50581.1"/>
    <property type="molecule type" value="mRNA"/>
</dbReference>
<dbReference type="PIR" id="G84830">
    <property type="entry name" value="G84830"/>
</dbReference>
<dbReference type="RefSeq" id="NP_001078032.1">
    <property type="nucleotide sequence ID" value="NM_001084563.2"/>
</dbReference>
<dbReference type="RefSeq" id="NP_001318392.1">
    <property type="nucleotide sequence ID" value="NM_001336844.1"/>
</dbReference>
<dbReference type="RefSeq" id="NP_001324081.1">
    <property type="nucleotide sequence ID" value="NM_001336845.1"/>
</dbReference>
<dbReference type="RefSeq" id="NP_001324082.1">
    <property type="nucleotide sequence ID" value="NM_001336846.1"/>
</dbReference>
<dbReference type="RefSeq" id="NP_565936.1">
    <property type="nucleotide sequence ID" value="NM_129616.4"/>
</dbReference>
<dbReference type="BioGRID" id="3987">
    <property type="interactions" value="10"/>
</dbReference>
<dbReference type="FunCoup" id="O22881">
    <property type="interactions" value="69"/>
</dbReference>
<dbReference type="IntAct" id="O22881">
    <property type="interactions" value="10"/>
</dbReference>
<dbReference type="STRING" id="3702.O22881"/>
<dbReference type="TCDB" id="2.A.72.3.8">
    <property type="family name" value="the k(+) uptake permease (kup) family"/>
</dbReference>
<dbReference type="GlyGen" id="O22881">
    <property type="glycosylation" value="1 site"/>
</dbReference>
<dbReference type="iPTMnet" id="O22881"/>
<dbReference type="SwissPalm" id="O22881"/>
<dbReference type="PaxDb" id="3702-AT2G40540.1"/>
<dbReference type="ProteomicsDB" id="249053"/>
<dbReference type="EnsemblPlants" id="AT2G40540.1">
    <property type="protein sequence ID" value="AT2G40540.1"/>
    <property type="gene ID" value="AT2G40540"/>
</dbReference>
<dbReference type="EnsemblPlants" id="AT2G40540.2">
    <property type="protein sequence ID" value="AT2G40540.2"/>
    <property type="gene ID" value="AT2G40540"/>
</dbReference>
<dbReference type="EnsemblPlants" id="AT2G40540.3">
    <property type="protein sequence ID" value="AT2G40540.3"/>
    <property type="gene ID" value="AT2G40540"/>
</dbReference>
<dbReference type="EnsemblPlants" id="AT2G40540.4">
    <property type="protein sequence ID" value="AT2G40540.4"/>
    <property type="gene ID" value="AT2G40540"/>
</dbReference>
<dbReference type="EnsemblPlants" id="AT2G40540.5">
    <property type="protein sequence ID" value="AT2G40540.5"/>
    <property type="gene ID" value="AT2G40540"/>
</dbReference>
<dbReference type="GeneID" id="818649"/>
<dbReference type="Gramene" id="AT2G40540.1">
    <property type="protein sequence ID" value="AT2G40540.1"/>
    <property type="gene ID" value="AT2G40540"/>
</dbReference>
<dbReference type="Gramene" id="AT2G40540.2">
    <property type="protein sequence ID" value="AT2G40540.2"/>
    <property type="gene ID" value="AT2G40540"/>
</dbReference>
<dbReference type="Gramene" id="AT2G40540.3">
    <property type="protein sequence ID" value="AT2G40540.3"/>
    <property type="gene ID" value="AT2G40540"/>
</dbReference>
<dbReference type="Gramene" id="AT2G40540.4">
    <property type="protein sequence ID" value="AT2G40540.4"/>
    <property type="gene ID" value="AT2G40540"/>
</dbReference>
<dbReference type="Gramene" id="AT2G40540.5">
    <property type="protein sequence ID" value="AT2G40540.5"/>
    <property type="gene ID" value="AT2G40540"/>
</dbReference>
<dbReference type="KEGG" id="ath:AT2G40540"/>
<dbReference type="Araport" id="AT2G40540"/>
<dbReference type="TAIR" id="AT2G40540">
    <property type="gene designation" value="KT2"/>
</dbReference>
<dbReference type="eggNOG" id="ENOG502QPSA">
    <property type="taxonomic scope" value="Eukaryota"/>
</dbReference>
<dbReference type="HOGENOM" id="CLU_008142_2_0_1"/>
<dbReference type="InParanoid" id="O22881"/>
<dbReference type="OMA" id="IMFLWHY"/>
<dbReference type="OrthoDB" id="504708at2759"/>
<dbReference type="PhylomeDB" id="O22881"/>
<dbReference type="PRO" id="PR:O22881"/>
<dbReference type="Proteomes" id="UP000006548">
    <property type="component" value="Chromosome 2"/>
</dbReference>
<dbReference type="ExpressionAtlas" id="O22881">
    <property type="expression patterns" value="baseline and differential"/>
</dbReference>
<dbReference type="GO" id="GO:0005886">
    <property type="term" value="C:plasma membrane"/>
    <property type="evidence" value="ECO:0007005"/>
    <property type="project" value="TAIR"/>
</dbReference>
<dbReference type="GO" id="GO:0015079">
    <property type="term" value="F:potassium ion transmembrane transporter activity"/>
    <property type="evidence" value="ECO:0007669"/>
    <property type="project" value="InterPro"/>
</dbReference>
<dbReference type="InterPro" id="IPR003855">
    <property type="entry name" value="K+_transporter"/>
</dbReference>
<dbReference type="InterPro" id="IPR053952">
    <property type="entry name" value="K_trans_C"/>
</dbReference>
<dbReference type="InterPro" id="IPR053951">
    <property type="entry name" value="K_trans_N"/>
</dbReference>
<dbReference type="NCBIfam" id="TIGR00794">
    <property type="entry name" value="kup"/>
    <property type="match status" value="1"/>
</dbReference>
<dbReference type="PANTHER" id="PTHR30540">
    <property type="entry name" value="OSMOTIC STRESS POTASSIUM TRANSPORTER"/>
    <property type="match status" value="1"/>
</dbReference>
<dbReference type="PANTHER" id="PTHR30540:SF6">
    <property type="entry name" value="POTASSIUM TRANSPORTER 2"/>
    <property type="match status" value="1"/>
</dbReference>
<dbReference type="Pfam" id="PF02705">
    <property type="entry name" value="K_trans"/>
    <property type="match status" value="1"/>
</dbReference>
<dbReference type="Pfam" id="PF22776">
    <property type="entry name" value="K_trans_C"/>
    <property type="match status" value="1"/>
</dbReference>
<name>POT2_ARATH</name>
<evidence type="ECO:0000255" key="1"/>
<evidence type="ECO:0000269" key="2">
    <source>
    </source>
</evidence>
<evidence type="ECO:0000269" key="3">
    <source>
    </source>
</evidence>
<evidence type="ECO:0000305" key="4"/>
<feature type="chain" id="PRO_0000209078" description="Potassium transporter 2">
    <location>
        <begin position="1"/>
        <end position="794"/>
    </location>
</feature>
<feature type="topological domain" description="Cytoplasmic" evidence="1">
    <location>
        <begin position="1"/>
        <end position="21"/>
    </location>
</feature>
<feature type="transmembrane region" description="Helical" evidence="1">
    <location>
        <begin position="22"/>
        <end position="42"/>
    </location>
</feature>
<feature type="topological domain" description="Extracellular" evidence="1">
    <location>
        <begin position="43"/>
        <end position="64"/>
    </location>
</feature>
<feature type="transmembrane region" description="Helical" evidence="1">
    <location>
        <begin position="65"/>
        <end position="85"/>
    </location>
</feature>
<feature type="topological domain" description="Cytoplasmic" evidence="1">
    <location>
        <begin position="86"/>
        <end position="153"/>
    </location>
</feature>
<feature type="transmembrane region" description="Helical" evidence="1">
    <location>
        <begin position="154"/>
        <end position="174"/>
    </location>
</feature>
<feature type="topological domain" description="Extracellular" evidence="1">
    <location>
        <begin position="175"/>
        <end position="193"/>
    </location>
</feature>
<feature type="transmembrane region" description="Helical" evidence="1">
    <location>
        <begin position="194"/>
        <end position="214"/>
    </location>
</feature>
<feature type="topological domain" description="Cytoplasmic" evidence="1">
    <location>
        <begin position="215"/>
        <end position="217"/>
    </location>
</feature>
<feature type="transmembrane region" description="Helical" evidence="1">
    <location>
        <begin position="218"/>
        <end position="238"/>
    </location>
</feature>
<feature type="topological domain" description="Extracellular" evidence="1">
    <location>
        <begin position="239"/>
        <end position="265"/>
    </location>
</feature>
<feature type="transmembrane region" description="Helical" evidence="1">
    <location>
        <begin position="266"/>
        <end position="286"/>
    </location>
</feature>
<feature type="topological domain" description="Cytoplasmic" evidence="1">
    <location>
        <begin position="287"/>
        <end position="294"/>
    </location>
</feature>
<feature type="transmembrane region" description="Helical" evidence="1">
    <location>
        <begin position="295"/>
        <end position="315"/>
    </location>
</feature>
<feature type="topological domain" description="Extracellular" evidence="1">
    <location>
        <begin position="316"/>
        <end position="339"/>
    </location>
</feature>
<feature type="transmembrane region" description="Helical" evidence="1">
    <location>
        <begin position="340"/>
        <end position="360"/>
    </location>
</feature>
<feature type="topological domain" description="Cytoplasmic" evidence="1">
    <location>
        <begin position="361"/>
        <end position="391"/>
    </location>
</feature>
<feature type="transmembrane region" description="Helical" evidence="1">
    <location>
        <begin position="392"/>
        <end position="412"/>
    </location>
</feature>
<feature type="topological domain" description="Extracellular" evidence="1">
    <location>
        <begin position="413"/>
        <end position="417"/>
    </location>
</feature>
<feature type="transmembrane region" description="Helical" evidence="1">
    <location>
        <begin position="418"/>
        <end position="438"/>
    </location>
</feature>
<feature type="transmembrane region" description="Helical" evidence="1">
    <location>
        <begin position="439"/>
        <end position="459"/>
    </location>
</feature>
<feature type="topological domain" description="Extracellular" evidence="1">
    <location>
        <begin position="460"/>
        <end position="476"/>
    </location>
</feature>
<feature type="transmembrane region" description="Helical" evidence="1">
    <location>
        <begin position="477"/>
        <end position="497"/>
    </location>
</feature>
<feature type="topological domain" description="Cytoplasmic" evidence="1">
    <location>
        <begin position="498"/>
        <end position="794"/>
    </location>
</feature>
<feature type="mutagenesis site" description="In kup2-5." evidence="2">
    <original>D</original>
    <variation>N</variation>
    <location>
        <position position="167"/>
    </location>
</feature>
<feature type="mutagenesis site" description="In kup2-4." evidence="2">
    <original>P</original>
    <variation>L</variation>
    <location>
        <position position="395"/>
    </location>
</feature>
<feature type="mutagenesis site" description="In kup2-1; also named shy3-1 induces a short hypocotyl phenotype and decrease in cell expansion in shoot tissues." evidence="2">
    <original>G</original>
    <variation>R</variation>
    <location>
        <position position="419"/>
    </location>
</feature>
<feature type="mutagenesis site" description="In kup2-6." evidence="2">
    <original>L</original>
    <variation>F</variation>
    <location>
        <position position="560"/>
    </location>
</feature>
<organism>
    <name type="scientific">Arabidopsis thaliana</name>
    <name type="common">Mouse-ear cress</name>
    <dbReference type="NCBI Taxonomy" id="3702"/>
    <lineage>
        <taxon>Eukaryota</taxon>
        <taxon>Viridiplantae</taxon>
        <taxon>Streptophyta</taxon>
        <taxon>Embryophyta</taxon>
        <taxon>Tracheophyta</taxon>
        <taxon>Spermatophyta</taxon>
        <taxon>Magnoliopsida</taxon>
        <taxon>eudicotyledons</taxon>
        <taxon>Gunneridae</taxon>
        <taxon>Pentapetalae</taxon>
        <taxon>rosids</taxon>
        <taxon>malvids</taxon>
        <taxon>Brassicales</taxon>
        <taxon>Brassicaceae</taxon>
        <taxon>Camelineae</taxon>
        <taxon>Arabidopsis</taxon>
    </lineage>
</organism>
<gene>
    <name type="primary">POT2</name>
    <name type="synonym">KT2</name>
    <name type="synonym">KUP2</name>
    <name type="synonym">SHY3</name>
    <name type="ordered locus">At2g40540</name>
    <name type="ORF">T2P4.11</name>
</gene>
<accession>O22881</accession>
<accession>O22398</accession>
<keyword id="KW-1003">Cell membrane</keyword>
<keyword id="KW-0406">Ion transport</keyword>
<keyword id="KW-0472">Membrane</keyword>
<keyword id="KW-0630">Potassium</keyword>
<keyword id="KW-0633">Potassium transport</keyword>
<keyword id="KW-1185">Reference proteome</keyword>
<keyword id="KW-0812">Transmembrane</keyword>
<keyword id="KW-1133">Transmembrane helix</keyword>
<keyword id="KW-0813">Transport</keyword>
<comment type="function">
    <text evidence="2">Low-affinity potassium transporter. Could mediate the potassium-dependent cell expansion in growing tissues.</text>
</comment>
<comment type="subcellular location">
    <subcellularLocation>
        <location evidence="4">Cell membrane</location>
        <topology evidence="4">Multi-pass membrane protein</topology>
    </subcellularLocation>
</comment>
<comment type="tissue specificity">
    <text evidence="3">Slightly detected in roots, stems, leaves and flowers of mature plants and in potassium-starved plants.</text>
</comment>
<comment type="developmental stage">
    <text evidence="2">Localized to cotyledons and hypocotyl in the early stages of development, and later appears in young leaves.</text>
</comment>
<comment type="disruption phenotype">
    <text evidence="2">Plants display a short hypocotyl phenotype. Kup2-2, kup2-3 and kup2-7 are considered as null mutants.</text>
</comment>
<comment type="similarity">
    <text evidence="4">Belongs to the HAK/KUP transporter (TC 2.A.72.3) family.</text>
</comment>
<proteinExistence type="evidence at protein level"/>
<sequence>MDLNLGKCCGSRSSKKESWRSVLLLAYQSLGVVYGDLSISPLYVFKSTFAEDIQHSETNEEIYGVMSFVFWTLTLVPLLKYVFIVLRADDNGEGGTFALYSLICRHVKVSLLPNRQVSDEALSTYKLEHPPEKNHDSCVKRYLEKHKWLHTALLLLVLLGTCMVIGDGLLTPAISVFSAVSGLELNMSKEHHQYAVIPITCFILVCLFSLQHFGTHRVGFVFAPIVLTWLLCISGIGLYNIIQWNPHIYKALSPTYMFMFLRKTRVSGWMSLGGILLCITGAEAMFADLGHFNYAAIQIAFTFLVYPALILAYMGQAAYLSRHHHSAHAIGFYVSVPKCLHWPVLAVAILASVVGSQAIISGTFSIINQSQSLGCFPRVKVIHTSDKMHGQIYIPEINWMLMILCIAVTIGFRDVKHLGNASGLAVMAVMLVTTCLTSLVIVLCWHKPPILALAFLLFFGSIELLYFSASLTKFREGAWLPILLSLIFMIIMFVWHYTTIKKYEFDLQNKVSLEWLLALGPSLGISRVPGIGLVFTDLTSGIPANFSRFVTNLPAFHRVLVFVCVKSVPVPFVPPAERYLVGRVGPVDHRSYRCIVRYGYRDVHQDVDSFETELVSKLADFIRYDWHKRTQQEDDNARSVQSNESSSESRLAVIGTVAYEIEDNLQPESVSIGFSTVESMEDVIQMAEPAPTATIRRVRFAVEENSYEDEGSTSSAEADAELRSELRDLLAAQEAGTAFILGHSHVKAKQGSSVMKRLAVNFGYNFLRRNCRGPDVALKVPPVSLLEVGMVYVV</sequence>
<reference key="1">
    <citation type="journal article" date="1997" name="FEBS Lett.">
        <title>A new family of K+ transporters from Arabidopsis that are conserved across phyla.</title>
        <authorList>
            <person name="Quintero F.J."/>
            <person name="Blatt M.R."/>
        </authorList>
    </citation>
    <scope>NUCLEOTIDE SEQUENCE [MRNA]</scope>
    <scope>CHARACTERIZATION</scope>
    <source>
        <strain>cv. Columbia</strain>
    </source>
</reference>
<reference key="2">
    <citation type="journal article" date="1999" name="Nature">
        <title>Sequence and analysis of chromosome 2 of the plant Arabidopsis thaliana.</title>
        <authorList>
            <person name="Lin X."/>
            <person name="Kaul S."/>
            <person name="Rounsley S.D."/>
            <person name="Shea T.P."/>
            <person name="Benito M.-I."/>
            <person name="Town C.D."/>
            <person name="Fujii C.Y."/>
            <person name="Mason T.M."/>
            <person name="Bowman C.L."/>
            <person name="Barnstead M.E."/>
            <person name="Feldblyum T.V."/>
            <person name="Buell C.R."/>
            <person name="Ketchum K.A."/>
            <person name="Lee J.J."/>
            <person name="Ronning C.M."/>
            <person name="Koo H.L."/>
            <person name="Moffat K.S."/>
            <person name="Cronin L.A."/>
            <person name="Shen M."/>
            <person name="Pai G."/>
            <person name="Van Aken S."/>
            <person name="Umayam L."/>
            <person name="Tallon L.J."/>
            <person name="Gill J.E."/>
            <person name="Adams M.D."/>
            <person name="Carrera A.J."/>
            <person name="Creasy T.H."/>
            <person name="Goodman H.M."/>
            <person name="Somerville C.R."/>
            <person name="Copenhaver G.P."/>
            <person name="Preuss D."/>
            <person name="Nierman W.C."/>
            <person name="White O."/>
            <person name="Eisen J.A."/>
            <person name="Salzberg S.L."/>
            <person name="Fraser C.M."/>
            <person name="Venter J.C."/>
        </authorList>
    </citation>
    <scope>NUCLEOTIDE SEQUENCE [LARGE SCALE GENOMIC DNA]</scope>
    <source>
        <strain>cv. Columbia</strain>
    </source>
</reference>
<reference key="3">
    <citation type="journal article" date="2017" name="Plant J.">
        <title>Araport11: a complete reannotation of the Arabidopsis thaliana reference genome.</title>
        <authorList>
            <person name="Cheng C.Y."/>
            <person name="Krishnakumar V."/>
            <person name="Chan A.P."/>
            <person name="Thibaud-Nissen F."/>
            <person name="Schobel S."/>
            <person name="Town C.D."/>
        </authorList>
    </citation>
    <scope>GENOME REANNOTATION</scope>
    <source>
        <strain>cv. Columbia</strain>
    </source>
</reference>
<reference key="4">
    <citation type="journal article" date="2003" name="Science">
        <title>Empirical analysis of transcriptional activity in the Arabidopsis genome.</title>
        <authorList>
            <person name="Yamada K."/>
            <person name="Lim J."/>
            <person name="Dale J.M."/>
            <person name="Chen H."/>
            <person name="Shinn P."/>
            <person name="Palm C.J."/>
            <person name="Southwick A.M."/>
            <person name="Wu H.C."/>
            <person name="Kim C.J."/>
            <person name="Nguyen M."/>
            <person name="Pham P.K."/>
            <person name="Cheuk R.F."/>
            <person name="Karlin-Newmann G."/>
            <person name="Liu S.X."/>
            <person name="Lam B."/>
            <person name="Sakano H."/>
            <person name="Wu T."/>
            <person name="Yu G."/>
            <person name="Miranda M."/>
            <person name="Quach H.L."/>
            <person name="Tripp M."/>
            <person name="Chang C.H."/>
            <person name="Lee J.M."/>
            <person name="Toriumi M.J."/>
            <person name="Chan M.M."/>
            <person name="Tang C.C."/>
            <person name="Onodera C.S."/>
            <person name="Deng J.M."/>
            <person name="Akiyama K."/>
            <person name="Ansari Y."/>
            <person name="Arakawa T."/>
            <person name="Banh J."/>
            <person name="Banno F."/>
            <person name="Bowser L."/>
            <person name="Brooks S.Y."/>
            <person name="Carninci P."/>
            <person name="Chao Q."/>
            <person name="Choy N."/>
            <person name="Enju A."/>
            <person name="Goldsmith A.D."/>
            <person name="Gurjal M."/>
            <person name="Hansen N.F."/>
            <person name="Hayashizaki Y."/>
            <person name="Johnson-Hopson C."/>
            <person name="Hsuan V.W."/>
            <person name="Iida K."/>
            <person name="Karnes M."/>
            <person name="Khan S."/>
            <person name="Koesema E."/>
            <person name="Ishida J."/>
            <person name="Jiang P.X."/>
            <person name="Jones T."/>
            <person name="Kawai J."/>
            <person name="Kamiya A."/>
            <person name="Meyers C."/>
            <person name="Nakajima M."/>
            <person name="Narusaka M."/>
            <person name="Seki M."/>
            <person name="Sakurai T."/>
            <person name="Satou M."/>
            <person name="Tamse R."/>
            <person name="Vaysberg M."/>
            <person name="Wallender E.K."/>
            <person name="Wong C."/>
            <person name="Yamamura Y."/>
            <person name="Yuan S."/>
            <person name="Shinozaki K."/>
            <person name="Davis R.W."/>
            <person name="Theologis A."/>
            <person name="Ecker J.R."/>
        </authorList>
    </citation>
    <scope>NUCLEOTIDE SEQUENCE [LARGE SCALE MRNA]</scope>
    <source>
        <strain>cv. Columbia</strain>
    </source>
</reference>
<reference key="5">
    <citation type="journal article" date="1998" name="Plant Cell">
        <title>AtKUP1: an Arabidopsis gene encoding high-affinity potassium transport activity.</title>
        <authorList>
            <person name="Kim E.J."/>
            <person name="Kwak J.M."/>
            <person name="Uozumi N."/>
            <person name="Schroeder J.I."/>
        </authorList>
    </citation>
    <scope>TISSUE SPECIFICITY</scope>
</reference>
<reference key="6">
    <citation type="journal article" date="2002" name="Plant Cell">
        <title>A mutation in the Arabidopsis KT2/KUP2 potassium transporter gene affects shoot cell expansion.</title>
        <authorList>
            <person name="Elumalai R.P."/>
            <person name="Nagpal P."/>
            <person name="Reed J.W."/>
        </authorList>
    </citation>
    <scope>FUNCTION</scope>
    <scope>DEVELOPMENTAL STAGE</scope>
    <scope>MUTAGENESIS OF ASP-167; PRO-395; GLY-419 AND LEU-560</scope>
    <scope>DISRUPTION PHENOTYPE</scope>
</reference>
<reference key="7">
    <citation type="journal article" date="2001" name="Plant Physiol.">
        <title>Phylogenetic relationships within cation transporter families of Arabidopsis.</title>
        <authorList>
            <person name="Maeser P."/>
            <person name="Thomine S."/>
            <person name="Schroeder J.I."/>
            <person name="Ward J.M."/>
            <person name="Hirschi K."/>
            <person name="Sze H."/>
            <person name="Talke I.N."/>
            <person name="Amtmann A."/>
            <person name="Maathuis F.J.M."/>
            <person name="Sanders D."/>
            <person name="Harper J.F."/>
            <person name="Tchieu J."/>
            <person name="Gribskov M."/>
            <person name="Persans M.W."/>
            <person name="Salt D.E."/>
            <person name="Kim S.A."/>
            <person name="Guerinot M.L."/>
        </authorList>
    </citation>
    <scope>GENE FAMILY</scope>
    <scope>NOMENCLATURE</scope>
</reference>